<organism>
    <name type="scientific">Mus musculus</name>
    <name type="common">Mouse</name>
    <dbReference type="NCBI Taxonomy" id="10090"/>
    <lineage>
        <taxon>Eukaryota</taxon>
        <taxon>Metazoa</taxon>
        <taxon>Chordata</taxon>
        <taxon>Craniata</taxon>
        <taxon>Vertebrata</taxon>
        <taxon>Euteleostomi</taxon>
        <taxon>Mammalia</taxon>
        <taxon>Eutheria</taxon>
        <taxon>Euarchontoglires</taxon>
        <taxon>Glires</taxon>
        <taxon>Rodentia</taxon>
        <taxon>Myomorpha</taxon>
        <taxon>Muroidea</taxon>
        <taxon>Muridae</taxon>
        <taxon>Murinae</taxon>
        <taxon>Mus</taxon>
        <taxon>Mus</taxon>
    </lineage>
</organism>
<keyword id="KW-0053">Apoptosis</keyword>
<keyword id="KW-0217">Developmental protein</keyword>
<keyword id="KW-0507">mRNA processing</keyword>
<keyword id="KW-0508">mRNA splicing</keyword>
<keyword id="KW-0509">mRNA transport</keyword>
<keyword id="KW-0539">Nucleus</keyword>
<keyword id="KW-0597">Phosphoprotein</keyword>
<keyword id="KW-1185">Reference proteome</keyword>
<keyword id="KW-0677">Repeat</keyword>
<keyword id="KW-0694">RNA-binding</keyword>
<keyword id="KW-0813">Transport</keyword>
<keyword id="KW-0853">WD repeat</keyword>
<feature type="chain" id="PRO_0000233159" description="THO complex subunit 6 homolog">
    <location>
        <begin position="1"/>
        <end position="341"/>
    </location>
</feature>
<feature type="repeat" description="WD 1" evidence="2">
    <location>
        <begin position="22"/>
        <end position="61"/>
    </location>
</feature>
<feature type="repeat" description="WD 2" evidence="2">
    <location>
        <begin position="74"/>
        <end position="112"/>
    </location>
</feature>
<feature type="repeat" description="WD 3" evidence="2">
    <location>
        <begin position="124"/>
        <end position="165"/>
    </location>
</feature>
<feature type="repeat" description="WD 4" evidence="2">
    <location>
        <begin position="166"/>
        <end position="205"/>
    </location>
</feature>
<feature type="repeat" description="WD 5" evidence="2">
    <location>
        <begin position="215"/>
        <end position="254"/>
    </location>
</feature>
<feature type="repeat" description="WD 6" evidence="2">
    <location>
        <begin position="256"/>
        <end position="293"/>
    </location>
</feature>
<feature type="repeat" description="WD 7" evidence="2">
    <location>
        <begin position="295"/>
        <end position="339"/>
    </location>
</feature>
<feature type="modified residue" description="Phosphoserine" evidence="2">
    <location>
        <position position="180"/>
    </location>
</feature>
<proteinExistence type="evidence at protein level"/>
<sequence length="341" mass="37315">MEHAAPLAVPLGQAEVFQALQRLHMTIFSQSVSPCGKFLAAGNNYGQIAIFSLSAALSSEAKEESKKPVVVFHAHDGPVYSMVSTDRHLLSAGDGEVKGWLWAEILKKGCKELWRRQPPYRTSLEVPEINALLLVPKENSLILAGGDCQLHSMDLETGAFTRALRGHTDYIHCLALRERSPEVLSGGEDGAVRLWDLRIAKEVQTIEVYKHEECSRPHNGRWIGCLATDSDWMVCGGGPALTLWHLRSSTPTTVFPIRAPQKHVTFYQDLILSAGQGCCVNHWQLSGELKAQVPGSSPGLLSLSLNQQPAAPECKVLTASGNSCRVDVFTNLGYRAFSLSF</sequence>
<dbReference type="EMBL" id="BC085131">
    <property type="protein sequence ID" value="AAH85131.1"/>
    <property type="molecule type" value="mRNA"/>
</dbReference>
<dbReference type="EMBL" id="BC089551">
    <property type="protein sequence ID" value="AAH89551.1"/>
    <property type="molecule type" value="mRNA"/>
</dbReference>
<dbReference type="CCDS" id="CCDS28454.1"/>
<dbReference type="RefSeq" id="NP_001008425.1">
    <property type="nucleotide sequence ID" value="NM_001008425.2"/>
</dbReference>
<dbReference type="RefSeq" id="NP_001344309.1">
    <property type="nucleotide sequence ID" value="NM_001357380.1"/>
</dbReference>
<dbReference type="RefSeq" id="XP_006524607.1">
    <property type="nucleotide sequence ID" value="XM_006524544.2"/>
</dbReference>
<dbReference type="RefSeq" id="XP_030105746.1">
    <property type="nucleotide sequence ID" value="XM_030249886.1"/>
</dbReference>
<dbReference type="SMR" id="Q5U4D9"/>
<dbReference type="BioGRID" id="239749">
    <property type="interactions" value="2"/>
</dbReference>
<dbReference type="FunCoup" id="Q5U4D9">
    <property type="interactions" value="2964"/>
</dbReference>
<dbReference type="IntAct" id="Q5U4D9">
    <property type="interactions" value="2"/>
</dbReference>
<dbReference type="STRING" id="10090.ENSMUSP00000038137"/>
<dbReference type="iPTMnet" id="Q5U4D9"/>
<dbReference type="PhosphoSitePlus" id="Q5U4D9"/>
<dbReference type="REPRODUCTION-2DPAGE" id="IPI00123949"/>
<dbReference type="PaxDb" id="10090-ENSMUSP00000038137"/>
<dbReference type="PeptideAtlas" id="Q5U4D9"/>
<dbReference type="ProteomicsDB" id="259021"/>
<dbReference type="Pumba" id="Q5U4D9"/>
<dbReference type="Antibodypedia" id="23992">
    <property type="antibodies" value="162 antibodies from 26 providers"/>
</dbReference>
<dbReference type="DNASU" id="386612"/>
<dbReference type="Ensembl" id="ENSMUST00000047436.11">
    <property type="protein sequence ID" value="ENSMUSP00000038137.5"/>
    <property type="gene ID" value="ENSMUSG00000041319.15"/>
</dbReference>
<dbReference type="Ensembl" id="ENSMUST00000095579.11">
    <property type="protein sequence ID" value="ENSMUSP00000093239.5"/>
    <property type="gene ID" value="ENSMUSG00000041319.15"/>
</dbReference>
<dbReference type="Ensembl" id="ENSMUST00000115490.9">
    <property type="protein sequence ID" value="ENSMUSP00000111153.3"/>
    <property type="gene ID" value="ENSMUSG00000041319.15"/>
</dbReference>
<dbReference type="GeneID" id="386612"/>
<dbReference type="KEGG" id="mmu:386612"/>
<dbReference type="UCSC" id="uc008ass.1">
    <property type="organism name" value="mouse"/>
</dbReference>
<dbReference type="AGR" id="MGI:2677480"/>
<dbReference type="CTD" id="79228"/>
<dbReference type="MGI" id="MGI:2677480">
    <property type="gene designation" value="Thoc6"/>
</dbReference>
<dbReference type="VEuPathDB" id="HostDB:ENSMUSG00000041319"/>
<dbReference type="eggNOG" id="KOG0649">
    <property type="taxonomic scope" value="Eukaryota"/>
</dbReference>
<dbReference type="GeneTree" id="ENSGT00390000015278"/>
<dbReference type="HOGENOM" id="CLU_060667_0_0_1"/>
<dbReference type="InParanoid" id="Q5U4D9"/>
<dbReference type="OMA" id="FTEDWLL"/>
<dbReference type="OrthoDB" id="273067at2759"/>
<dbReference type="PhylomeDB" id="Q5U4D9"/>
<dbReference type="TreeFam" id="TF324760"/>
<dbReference type="Reactome" id="R-MMU-159236">
    <property type="pathway name" value="Transport of Mature mRNA derived from an Intron-Containing Transcript"/>
</dbReference>
<dbReference type="Reactome" id="R-MMU-72187">
    <property type="pathway name" value="mRNA 3'-end processing"/>
</dbReference>
<dbReference type="Reactome" id="R-MMU-73856">
    <property type="pathway name" value="RNA Polymerase II Transcription Termination"/>
</dbReference>
<dbReference type="BioGRID-ORCS" id="386612">
    <property type="hits" value="16 hits in 80 CRISPR screens"/>
</dbReference>
<dbReference type="ChiTaRS" id="Thoc6">
    <property type="organism name" value="mouse"/>
</dbReference>
<dbReference type="PRO" id="PR:Q5U4D9"/>
<dbReference type="Proteomes" id="UP000000589">
    <property type="component" value="Chromosome 17"/>
</dbReference>
<dbReference type="RNAct" id="Q5U4D9">
    <property type="molecule type" value="protein"/>
</dbReference>
<dbReference type="Bgee" id="ENSMUSG00000041319">
    <property type="expression patterns" value="Expressed in dorsal pancreas and 212 other cell types or tissues"/>
</dbReference>
<dbReference type="ExpressionAtlas" id="Q5U4D9">
    <property type="expression patterns" value="baseline and differential"/>
</dbReference>
<dbReference type="GO" id="GO:0000781">
    <property type="term" value="C:chromosome, telomeric region"/>
    <property type="evidence" value="ECO:0007669"/>
    <property type="project" value="Ensembl"/>
</dbReference>
<dbReference type="GO" id="GO:0016607">
    <property type="term" value="C:nuclear speck"/>
    <property type="evidence" value="ECO:0007669"/>
    <property type="project" value="UniProtKB-SubCell"/>
</dbReference>
<dbReference type="GO" id="GO:0005634">
    <property type="term" value="C:nucleus"/>
    <property type="evidence" value="ECO:0000250"/>
    <property type="project" value="UniProtKB"/>
</dbReference>
<dbReference type="GO" id="GO:0000445">
    <property type="term" value="C:THO complex part of transcription export complex"/>
    <property type="evidence" value="ECO:0007669"/>
    <property type="project" value="Ensembl"/>
</dbReference>
<dbReference type="GO" id="GO:0003723">
    <property type="term" value="F:RNA binding"/>
    <property type="evidence" value="ECO:0007669"/>
    <property type="project" value="UniProtKB-KW"/>
</dbReference>
<dbReference type="GO" id="GO:0006915">
    <property type="term" value="P:apoptotic process"/>
    <property type="evidence" value="ECO:0007669"/>
    <property type="project" value="UniProtKB-KW"/>
</dbReference>
<dbReference type="GO" id="GO:0007417">
    <property type="term" value="P:central nervous system development"/>
    <property type="evidence" value="ECO:0000250"/>
    <property type="project" value="UniProtKB"/>
</dbReference>
<dbReference type="GO" id="GO:0006406">
    <property type="term" value="P:mRNA export from nucleus"/>
    <property type="evidence" value="ECO:0007669"/>
    <property type="project" value="Ensembl"/>
</dbReference>
<dbReference type="GO" id="GO:0006397">
    <property type="term" value="P:mRNA processing"/>
    <property type="evidence" value="ECO:0007669"/>
    <property type="project" value="UniProtKB-KW"/>
</dbReference>
<dbReference type="GO" id="GO:0008380">
    <property type="term" value="P:RNA splicing"/>
    <property type="evidence" value="ECO:0007669"/>
    <property type="project" value="UniProtKB-KW"/>
</dbReference>
<dbReference type="FunFam" id="2.130.10.10:FF:000240">
    <property type="entry name" value="THO complex subunit 6 homolog isoform X1"/>
    <property type="match status" value="1"/>
</dbReference>
<dbReference type="Gene3D" id="2.130.10.10">
    <property type="entry name" value="YVTN repeat-like/Quinoprotein amine dehydrogenase"/>
    <property type="match status" value="1"/>
</dbReference>
<dbReference type="InterPro" id="IPR042626">
    <property type="entry name" value="THOC6"/>
</dbReference>
<dbReference type="InterPro" id="IPR015943">
    <property type="entry name" value="WD40/YVTN_repeat-like_dom_sf"/>
</dbReference>
<dbReference type="InterPro" id="IPR019775">
    <property type="entry name" value="WD40_repeat_CS"/>
</dbReference>
<dbReference type="InterPro" id="IPR036322">
    <property type="entry name" value="WD40_repeat_dom_sf"/>
</dbReference>
<dbReference type="InterPro" id="IPR001680">
    <property type="entry name" value="WD40_rpt"/>
</dbReference>
<dbReference type="PANTHER" id="PTHR44411">
    <property type="entry name" value="THO COMPLEX SUBUNIT 6 HOMOLOG"/>
    <property type="match status" value="1"/>
</dbReference>
<dbReference type="PANTHER" id="PTHR44411:SF1">
    <property type="entry name" value="THO COMPLEX SUBUNIT 6 HOMOLOG"/>
    <property type="match status" value="1"/>
</dbReference>
<dbReference type="Pfam" id="PF00400">
    <property type="entry name" value="WD40"/>
    <property type="match status" value="2"/>
</dbReference>
<dbReference type="SMART" id="SM00320">
    <property type="entry name" value="WD40"/>
    <property type="match status" value="3"/>
</dbReference>
<dbReference type="SUPFAM" id="SSF50978">
    <property type="entry name" value="WD40 repeat-like"/>
    <property type="match status" value="1"/>
</dbReference>
<dbReference type="PROSITE" id="PS00678">
    <property type="entry name" value="WD_REPEATS_1"/>
    <property type="match status" value="1"/>
</dbReference>
<dbReference type="PROSITE" id="PS50082">
    <property type="entry name" value="WD_REPEATS_2"/>
    <property type="match status" value="1"/>
</dbReference>
<dbReference type="PROSITE" id="PS50294">
    <property type="entry name" value="WD_REPEATS_REGION"/>
    <property type="match status" value="1"/>
</dbReference>
<reference key="1">
    <citation type="journal article" date="2004" name="Genome Res.">
        <title>The status, quality, and expansion of the NIH full-length cDNA project: the Mammalian Gene Collection (MGC).</title>
        <authorList>
            <consortium name="The MGC Project Team"/>
        </authorList>
    </citation>
    <scope>NUCLEOTIDE SEQUENCE [LARGE SCALE MRNA]</scope>
    <source>
        <strain>C57BL/6J</strain>
        <tissue>Fetal brain</tissue>
        <tissue>Kidney</tissue>
    </source>
</reference>
<reference key="2">
    <citation type="journal article" date="2010" name="Cell">
        <title>A tissue-specific atlas of mouse protein phosphorylation and expression.</title>
        <authorList>
            <person name="Huttlin E.L."/>
            <person name="Jedrychowski M.P."/>
            <person name="Elias J.E."/>
            <person name="Goswami T."/>
            <person name="Rad R."/>
            <person name="Beausoleil S.A."/>
            <person name="Villen J."/>
            <person name="Haas W."/>
            <person name="Sowa M.E."/>
            <person name="Gygi S.P."/>
        </authorList>
    </citation>
    <scope>IDENTIFICATION BY MASS SPECTROMETRY [LARGE SCALE ANALYSIS]</scope>
    <source>
        <tissue>Spleen</tissue>
    </source>
</reference>
<gene>
    <name type="primary">Thoc6</name>
    <name type="synonym">Wdr58</name>
</gene>
<comment type="function">
    <text evidence="2">Component of the THO subcomplex of the TREX complex which is thought to couple mRNA transcription, processing and nuclear export, and which specifically associates with spliced mRNA and not with unspliced pre-mRNA. Plays a key structural role in the oligomerization of the THO-DDX39B complex. TREX is recruited to spliced mRNAs by a transcription-independent mechanism, binds to mRNA upstream of the exon-junction complex (EJC) and is recruited in a splicing- and cap-dependent manner to a region near the 5' end of the mRNA where it functions in mRNA export to the cytoplasm via the TAP/NXF1 pathway. Plays a role in apoptosis negative control involved in brain development.</text>
</comment>
<comment type="subunit">
    <text evidence="2">Component of the THO subcomplex, which is composed of THOC1, THOC2, THOC3, THOC5, THOC6 and THOC7. The THO subcomplex interacts with DDX39B to form the THO-DDX39B complex which multimerizes into a 28-subunit tetrameric assembly. Component of the transcription/export (TREX) complex at least composed of ALYREF/THOC4, DDX39B, SARNP/CIP29, CHTOP and the THO subcomplex; in the complex interacts with THOC5; together with THOC5 and THOC7, plays a key structural role in the oligomerization of the THO-DDX39B complex. TREX seems to have a dynamic structure involving ATP-dependent remodeling.</text>
</comment>
<comment type="subcellular location">
    <subcellularLocation>
        <location evidence="1">Nucleus</location>
    </subcellularLocation>
    <subcellularLocation>
        <location evidence="1">Nucleus speckle</location>
    </subcellularLocation>
</comment>
<comment type="similarity">
    <text evidence="3">Belongs to the WD repeat THOC6 family.</text>
</comment>
<name>THOC6_MOUSE</name>
<protein>
    <recommendedName>
        <fullName>THO complex subunit 6 homolog</fullName>
    </recommendedName>
    <alternativeName>
        <fullName>WD repeat-containing protein 58</fullName>
    </alternativeName>
</protein>
<evidence type="ECO:0000250" key="1"/>
<evidence type="ECO:0000250" key="2">
    <source>
        <dbReference type="UniProtKB" id="Q86W42"/>
    </source>
</evidence>
<evidence type="ECO:0000305" key="3"/>
<accession>Q5U4D9</accession>